<proteinExistence type="evidence at protein level"/>
<accession>P56891</accession>
<keyword id="KW-0963">Cytoplasm</keyword>
<keyword id="KW-0408">Iron</keyword>
<keyword id="KW-0411">Iron-sulfur</keyword>
<keyword id="KW-0479">Metal-binding</keyword>
<keyword id="KW-0560">Oxidoreductase</keyword>
<keyword id="KW-1185">Reference proteome</keyword>
<gene>
    <name evidence="1 3" type="primary">cysH</name>
    <name type="ordered locus">R00944</name>
    <name type="ORF">SMc00092</name>
</gene>
<dbReference type="EC" id="1.8.4.10" evidence="1 2"/>
<dbReference type="EMBL" id="AF158023">
    <property type="protein sequence ID" value="AAD55759.1"/>
    <property type="molecule type" value="Genomic_DNA"/>
</dbReference>
<dbReference type="EMBL" id="AL591688">
    <property type="protein sequence ID" value="CAC45516.1"/>
    <property type="molecule type" value="Genomic_DNA"/>
</dbReference>
<dbReference type="RefSeq" id="NP_385050.1">
    <property type="nucleotide sequence ID" value="NC_003047.1"/>
</dbReference>
<dbReference type="RefSeq" id="WP_010968938.1">
    <property type="nucleotide sequence ID" value="NC_003047.1"/>
</dbReference>
<dbReference type="SMR" id="P56891"/>
<dbReference type="EnsemblBacteria" id="CAC45516">
    <property type="protein sequence ID" value="CAC45516"/>
    <property type="gene ID" value="SMc00092"/>
</dbReference>
<dbReference type="KEGG" id="sme:SMc00092"/>
<dbReference type="PATRIC" id="fig|266834.11.peg.2342"/>
<dbReference type="eggNOG" id="COG0175">
    <property type="taxonomic scope" value="Bacteria"/>
</dbReference>
<dbReference type="HOGENOM" id="CLU_044089_1_0_5"/>
<dbReference type="OrthoDB" id="9794018at2"/>
<dbReference type="BioCyc" id="MetaCyc:MONOMER-16110"/>
<dbReference type="BRENDA" id="1.8.4.10">
    <property type="organism ID" value="5347"/>
</dbReference>
<dbReference type="Proteomes" id="UP000001976">
    <property type="component" value="Chromosome"/>
</dbReference>
<dbReference type="GO" id="GO:0005737">
    <property type="term" value="C:cytoplasm"/>
    <property type="evidence" value="ECO:0007669"/>
    <property type="project" value="UniProtKB-SubCell"/>
</dbReference>
<dbReference type="GO" id="GO:0051539">
    <property type="term" value="F:4 iron, 4 sulfur cluster binding"/>
    <property type="evidence" value="ECO:0007669"/>
    <property type="project" value="UniProtKB-UniRule"/>
</dbReference>
<dbReference type="GO" id="GO:0043866">
    <property type="term" value="F:adenylyl-sulfate reductase (thioredoxin) activity"/>
    <property type="evidence" value="ECO:0007669"/>
    <property type="project" value="UniProtKB-EC"/>
</dbReference>
<dbReference type="GO" id="GO:0046872">
    <property type="term" value="F:metal ion binding"/>
    <property type="evidence" value="ECO:0007669"/>
    <property type="project" value="UniProtKB-KW"/>
</dbReference>
<dbReference type="GO" id="GO:0004604">
    <property type="term" value="F:phosphoadenylyl-sulfate reductase (thioredoxin) activity"/>
    <property type="evidence" value="ECO:0007669"/>
    <property type="project" value="UniProtKB-UniRule"/>
</dbReference>
<dbReference type="GO" id="GO:0019344">
    <property type="term" value="P:cysteine biosynthetic process"/>
    <property type="evidence" value="ECO:0007669"/>
    <property type="project" value="InterPro"/>
</dbReference>
<dbReference type="GO" id="GO:0070814">
    <property type="term" value="P:hydrogen sulfide biosynthetic process"/>
    <property type="evidence" value="ECO:0007669"/>
    <property type="project" value="UniProtKB-UniRule"/>
</dbReference>
<dbReference type="GO" id="GO:0019379">
    <property type="term" value="P:sulfate assimilation, phosphoadenylyl sulfate reduction by phosphoadenylyl-sulfate reductase (thioredoxin)"/>
    <property type="evidence" value="ECO:0007669"/>
    <property type="project" value="UniProtKB-UniRule"/>
</dbReference>
<dbReference type="CDD" id="cd23945">
    <property type="entry name" value="PAPS_reductase"/>
    <property type="match status" value="1"/>
</dbReference>
<dbReference type="Gene3D" id="3.40.50.620">
    <property type="entry name" value="HUPs"/>
    <property type="match status" value="1"/>
</dbReference>
<dbReference type="HAMAP" id="MF_00063">
    <property type="entry name" value="CysH"/>
    <property type="match status" value="1"/>
</dbReference>
<dbReference type="InterPro" id="IPR011798">
    <property type="entry name" value="APS_reductase"/>
</dbReference>
<dbReference type="InterPro" id="IPR004511">
    <property type="entry name" value="PAPS/APS_Rdtase"/>
</dbReference>
<dbReference type="InterPro" id="IPR002500">
    <property type="entry name" value="PAPS_reduct_dom"/>
</dbReference>
<dbReference type="InterPro" id="IPR014729">
    <property type="entry name" value="Rossmann-like_a/b/a_fold"/>
</dbReference>
<dbReference type="NCBIfam" id="TIGR02055">
    <property type="entry name" value="APS_reductase"/>
    <property type="match status" value="1"/>
</dbReference>
<dbReference type="NCBIfam" id="NF002537">
    <property type="entry name" value="PRK02090.1"/>
    <property type="match status" value="1"/>
</dbReference>
<dbReference type="PANTHER" id="PTHR46482:SF9">
    <property type="entry name" value="5'-ADENYLYLSULFATE REDUCTASE 1, CHLOROPLASTIC"/>
    <property type="match status" value="1"/>
</dbReference>
<dbReference type="PANTHER" id="PTHR46482">
    <property type="entry name" value="5'-ADENYLYLSULFATE REDUCTASE 3, CHLOROPLASTIC"/>
    <property type="match status" value="1"/>
</dbReference>
<dbReference type="Pfam" id="PF01507">
    <property type="entry name" value="PAPS_reduct"/>
    <property type="match status" value="1"/>
</dbReference>
<dbReference type="PIRSF" id="PIRSF000857">
    <property type="entry name" value="PAPS_reductase"/>
    <property type="match status" value="1"/>
</dbReference>
<dbReference type="SUPFAM" id="SSF52402">
    <property type="entry name" value="Adenine nucleotide alpha hydrolases-like"/>
    <property type="match status" value="1"/>
</dbReference>
<organism>
    <name type="scientific">Rhizobium meliloti (strain 1021)</name>
    <name type="common">Ensifer meliloti</name>
    <name type="synonym">Sinorhizobium meliloti</name>
    <dbReference type="NCBI Taxonomy" id="266834"/>
    <lineage>
        <taxon>Bacteria</taxon>
        <taxon>Pseudomonadati</taxon>
        <taxon>Pseudomonadota</taxon>
        <taxon>Alphaproteobacteria</taxon>
        <taxon>Hyphomicrobiales</taxon>
        <taxon>Rhizobiaceae</taxon>
        <taxon>Sinorhizobium/Ensifer group</taxon>
        <taxon>Sinorhizobium</taxon>
    </lineage>
</organism>
<feature type="chain" id="PRO_0000100640" description="Adenosine 5'-phosphosulfate reductase">
    <location>
        <begin position="1"/>
        <end position="265"/>
    </location>
</feature>
<feature type="active site" description="Nucleophile; cysteine thiosulfonate intermediate" evidence="1">
    <location>
        <position position="246"/>
    </location>
</feature>
<feature type="binding site" evidence="1">
    <location>
        <position position="135"/>
    </location>
    <ligand>
        <name>[4Fe-4S] cluster</name>
        <dbReference type="ChEBI" id="CHEBI:49883"/>
    </ligand>
</feature>
<feature type="binding site" evidence="1">
    <location>
        <position position="136"/>
    </location>
    <ligand>
        <name>[4Fe-4S] cluster</name>
        <dbReference type="ChEBI" id="CHEBI:49883"/>
    </ligand>
</feature>
<feature type="binding site" evidence="1">
    <location>
        <position position="218"/>
    </location>
    <ligand>
        <name>[4Fe-4S] cluster</name>
        <dbReference type="ChEBI" id="CHEBI:49883"/>
    </ligand>
</feature>
<feature type="binding site" evidence="1">
    <location>
        <position position="221"/>
    </location>
    <ligand>
        <name>[4Fe-4S] cluster</name>
        <dbReference type="ChEBI" id="CHEBI:49883"/>
    </ligand>
</feature>
<comment type="function">
    <text evidence="1 2">Catalyzes the formation of sulfite from adenosine 5'-phosphosulfate (APS) using thioredoxin as an electron donor.</text>
</comment>
<comment type="catalytic activity">
    <reaction evidence="1 2">
        <text>[thioredoxin]-disulfide + sulfite + AMP + 2 H(+) = adenosine 5'-phosphosulfate + [thioredoxin]-dithiol</text>
        <dbReference type="Rhea" id="RHEA:21976"/>
        <dbReference type="Rhea" id="RHEA-COMP:10698"/>
        <dbReference type="Rhea" id="RHEA-COMP:10700"/>
        <dbReference type="ChEBI" id="CHEBI:15378"/>
        <dbReference type="ChEBI" id="CHEBI:17359"/>
        <dbReference type="ChEBI" id="CHEBI:29950"/>
        <dbReference type="ChEBI" id="CHEBI:50058"/>
        <dbReference type="ChEBI" id="CHEBI:58243"/>
        <dbReference type="ChEBI" id="CHEBI:456215"/>
        <dbReference type="EC" id="1.8.4.10"/>
    </reaction>
</comment>
<comment type="cofactor">
    <cofactor evidence="1">
        <name>[4Fe-4S] cluster</name>
        <dbReference type="ChEBI" id="CHEBI:49883"/>
    </cofactor>
    <text evidence="1">Binds 1 [4Fe-4S] cluster per subunit.</text>
</comment>
<comment type="biophysicochemical properties">
    <kinetics>
        <KM evidence="2">3 uM for APS</KM>
        <Vmax evidence="2">5.0 nmol/min/mg enzyme</Vmax>
        <text evidence="2">Km for phosphoadenosine-5'-phosphosulfate (PAPS) is above 100 uM and Vmax is lower than 0.21 pmol/min/mg.</text>
    </kinetics>
</comment>
<comment type="pathway">
    <text evidence="1 5">Sulfur metabolism; hydrogen sulfide biosynthesis; sulfite from sulfate.</text>
</comment>
<comment type="subcellular location">
    <subcellularLocation>
        <location evidence="1">Cytoplasm</location>
    </subcellularLocation>
</comment>
<comment type="similarity">
    <text evidence="1 4">Belongs to the PAPS reductase family. CysH subfamily.</text>
</comment>
<name>CYSH_RHIME</name>
<sequence length="265" mass="28767">MTTQSLKAEAVALEADVMALDAEAKALNDKLESLDLAGRLALIAGLEGRAVFTTSLGIEDQVITAAIGSNRLDIEVATLKTGRLFNETVALIDQTEETYDILIKRYYPEKADIDAYVAQYGMNGFYESVEARHACCGVRKLKPLARALDGASYWITGLRRGQSGNRATTPFAEADVERGLIKINPLADWGIETIQAHVAAEGIPVNPLHSRGYPSIGCEPCTRAIKPGEPERAGRWWWENDEKRECGLHVPEAASSIIPNASNAA</sequence>
<protein>
    <recommendedName>
        <fullName evidence="1 3">Adenosine 5'-phosphosulfate reductase</fullName>
        <shortName evidence="1 3">APS reductase</shortName>
        <ecNumber evidence="1 2">1.8.4.10</ecNumber>
    </recommendedName>
    <alternativeName>
        <fullName evidence="1 4">5'-adenylylsulfate reductase</fullName>
    </alternativeName>
    <alternativeName>
        <fullName evidence="1 4">Thioredoxin-dependent 5'-adenylylsulfate reductase</fullName>
    </alternativeName>
</protein>
<reference key="1">
    <citation type="journal article" date="1999" name="J. Bacteriol.">
        <title>Reduction of adenosine-5'-phosphosulfate instead of 3'-phosphoadenosine-5'-phosphosulfate in cysteine biosynthesis by Rhizobium meliloti and other members of the family Rhizobiaceae.</title>
        <authorList>
            <person name="Abola A.P."/>
            <person name="Willits M.G."/>
            <person name="Wang R.C."/>
            <person name="Long S.R."/>
        </authorList>
    </citation>
    <scope>NUCLEOTIDE SEQUENCE [GENOMIC DNA]</scope>
    <scope>FUNCTION</scope>
    <scope>CATALYTIC ACTIVITY</scope>
    <scope>BIOPHYSICOCHEMICAL PROPERTIES</scope>
    <scope>PATHWAY</scope>
    <source>
        <strain>1021</strain>
    </source>
</reference>
<reference key="2">
    <citation type="journal article" date="2001" name="Proc. Natl. Acad. Sci. U.S.A.">
        <title>Analysis of the chromosome sequence of the legume symbiont Sinorhizobium meliloti strain 1021.</title>
        <authorList>
            <person name="Capela D."/>
            <person name="Barloy-Hubler F."/>
            <person name="Gouzy J."/>
            <person name="Bothe G."/>
            <person name="Ampe F."/>
            <person name="Batut J."/>
            <person name="Boistard P."/>
            <person name="Becker A."/>
            <person name="Boutry M."/>
            <person name="Cadieu E."/>
            <person name="Dreano S."/>
            <person name="Gloux S."/>
            <person name="Godrie T."/>
            <person name="Goffeau A."/>
            <person name="Kahn D."/>
            <person name="Kiss E."/>
            <person name="Lelaure V."/>
            <person name="Masuy D."/>
            <person name="Pohl T."/>
            <person name="Portetelle D."/>
            <person name="Puehler A."/>
            <person name="Purnelle B."/>
            <person name="Ramsperger U."/>
            <person name="Renard C."/>
            <person name="Thebault P."/>
            <person name="Vandenbol M."/>
            <person name="Weidner S."/>
            <person name="Galibert F."/>
        </authorList>
    </citation>
    <scope>NUCLEOTIDE SEQUENCE [LARGE SCALE GENOMIC DNA]</scope>
    <source>
        <strain>1021</strain>
    </source>
</reference>
<reference key="3">
    <citation type="journal article" date="2001" name="Science">
        <title>The composite genome of the legume symbiont Sinorhizobium meliloti.</title>
        <authorList>
            <person name="Galibert F."/>
            <person name="Finan T.M."/>
            <person name="Long S.R."/>
            <person name="Puehler A."/>
            <person name="Abola P."/>
            <person name="Ampe F."/>
            <person name="Barloy-Hubler F."/>
            <person name="Barnett M.J."/>
            <person name="Becker A."/>
            <person name="Boistard P."/>
            <person name="Bothe G."/>
            <person name="Boutry M."/>
            <person name="Bowser L."/>
            <person name="Buhrmester J."/>
            <person name="Cadieu E."/>
            <person name="Capela D."/>
            <person name="Chain P."/>
            <person name="Cowie A."/>
            <person name="Davis R.W."/>
            <person name="Dreano S."/>
            <person name="Federspiel N.A."/>
            <person name="Fisher R.F."/>
            <person name="Gloux S."/>
            <person name="Godrie T."/>
            <person name="Goffeau A."/>
            <person name="Golding B."/>
            <person name="Gouzy J."/>
            <person name="Gurjal M."/>
            <person name="Hernandez-Lucas I."/>
            <person name="Hong A."/>
            <person name="Huizar L."/>
            <person name="Hyman R.W."/>
            <person name="Jones T."/>
            <person name="Kahn D."/>
            <person name="Kahn M.L."/>
            <person name="Kalman S."/>
            <person name="Keating D.H."/>
            <person name="Kiss E."/>
            <person name="Komp C."/>
            <person name="Lelaure V."/>
            <person name="Masuy D."/>
            <person name="Palm C."/>
            <person name="Peck M.C."/>
            <person name="Pohl T.M."/>
            <person name="Portetelle D."/>
            <person name="Purnelle B."/>
            <person name="Ramsperger U."/>
            <person name="Surzycki R."/>
            <person name="Thebault P."/>
            <person name="Vandenbol M."/>
            <person name="Vorhoelter F.J."/>
            <person name="Weidner S."/>
            <person name="Wells D.H."/>
            <person name="Wong K."/>
            <person name="Yeh K.-C."/>
            <person name="Batut J."/>
        </authorList>
    </citation>
    <scope>NUCLEOTIDE SEQUENCE [LARGE SCALE GENOMIC DNA]</scope>
    <source>
        <strain>1021</strain>
    </source>
</reference>
<evidence type="ECO:0000255" key="1">
    <source>
        <dbReference type="HAMAP-Rule" id="MF_00063"/>
    </source>
</evidence>
<evidence type="ECO:0000269" key="2">
    <source>
    </source>
</evidence>
<evidence type="ECO:0000303" key="3">
    <source>
    </source>
</evidence>
<evidence type="ECO:0000305" key="4"/>
<evidence type="ECO:0000305" key="5">
    <source>
    </source>
</evidence>